<dbReference type="EC" id="2.7.7.6" evidence="1"/>
<dbReference type="EMBL" id="AP006878">
    <property type="protein sequence ID" value="BAD85273.1"/>
    <property type="molecule type" value="Genomic_DNA"/>
</dbReference>
<dbReference type="RefSeq" id="WP_011250035.1">
    <property type="nucleotide sequence ID" value="NC_006624.1"/>
</dbReference>
<dbReference type="PDB" id="4QIW">
    <property type="method" value="X-ray"/>
    <property type="resolution" value="3.50 A"/>
    <property type="chains" value="H/S=1-82"/>
</dbReference>
<dbReference type="PDB" id="6KF3">
    <property type="method" value="EM"/>
    <property type="resolution" value="3.90 A"/>
    <property type="chains" value="H=1-82"/>
</dbReference>
<dbReference type="PDB" id="6KF4">
    <property type="method" value="EM"/>
    <property type="resolution" value="3.97 A"/>
    <property type="chains" value="H=1-82"/>
</dbReference>
<dbReference type="PDB" id="6KF9">
    <property type="method" value="EM"/>
    <property type="resolution" value="3.79 A"/>
    <property type="chains" value="H=1-82"/>
</dbReference>
<dbReference type="PDB" id="9BCT">
    <property type="method" value="EM"/>
    <property type="resolution" value="2.50 A"/>
    <property type="chains" value="H=1-82"/>
</dbReference>
<dbReference type="PDB" id="9BCU">
    <property type="method" value="EM"/>
    <property type="resolution" value="2.20 A"/>
    <property type="chains" value="H=1-82"/>
</dbReference>
<dbReference type="PDBsum" id="4QIW"/>
<dbReference type="PDBsum" id="6KF3"/>
<dbReference type="PDBsum" id="6KF4"/>
<dbReference type="PDBsum" id="6KF9"/>
<dbReference type="PDBsum" id="9BCT"/>
<dbReference type="PDBsum" id="9BCU"/>
<dbReference type="EMDB" id="EMD-44438"/>
<dbReference type="EMDB" id="EMD-44439"/>
<dbReference type="SMR" id="Q5JE31"/>
<dbReference type="FunCoup" id="Q5JE31">
    <property type="interactions" value="2"/>
</dbReference>
<dbReference type="STRING" id="69014.TK1084"/>
<dbReference type="EnsemblBacteria" id="BAD85273">
    <property type="protein sequence ID" value="BAD85273"/>
    <property type="gene ID" value="TK1084"/>
</dbReference>
<dbReference type="GeneID" id="78447597"/>
<dbReference type="KEGG" id="tko:TK1084"/>
<dbReference type="PATRIC" id="fig|69014.16.peg.1060"/>
<dbReference type="eggNOG" id="arCOG04258">
    <property type="taxonomic scope" value="Archaea"/>
</dbReference>
<dbReference type="HOGENOM" id="CLU_058320_4_0_2"/>
<dbReference type="InParanoid" id="Q5JE31"/>
<dbReference type="OrthoDB" id="30537at2157"/>
<dbReference type="PhylomeDB" id="Q5JE31"/>
<dbReference type="Proteomes" id="UP000000536">
    <property type="component" value="Chromosome"/>
</dbReference>
<dbReference type="GO" id="GO:0005737">
    <property type="term" value="C:cytoplasm"/>
    <property type="evidence" value="ECO:0007669"/>
    <property type="project" value="UniProtKB-SubCell"/>
</dbReference>
<dbReference type="GO" id="GO:0000428">
    <property type="term" value="C:DNA-directed RNA polymerase complex"/>
    <property type="evidence" value="ECO:0007669"/>
    <property type="project" value="UniProtKB-KW"/>
</dbReference>
<dbReference type="GO" id="GO:0003677">
    <property type="term" value="F:DNA binding"/>
    <property type="evidence" value="ECO:0007669"/>
    <property type="project" value="InterPro"/>
</dbReference>
<dbReference type="GO" id="GO:0003899">
    <property type="term" value="F:DNA-directed RNA polymerase activity"/>
    <property type="evidence" value="ECO:0007669"/>
    <property type="project" value="UniProtKB-UniRule"/>
</dbReference>
<dbReference type="GO" id="GO:0006351">
    <property type="term" value="P:DNA-templated transcription"/>
    <property type="evidence" value="ECO:0007669"/>
    <property type="project" value="UniProtKB-UniRule"/>
</dbReference>
<dbReference type="FunFam" id="3.90.940.20:FF:000001">
    <property type="entry name" value="DNA-directed RNA polymerases I, II, and III subunit RPABC1"/>
    <property type="match status" value="1"/>
</dbReference>
<dbReference type="Gene3D" id="3.90.940.20">
    <property type="entry name" value="RPB5-like RNA polymerase subunit"/>
    <property type="match status" value="1"/>
</dbReference>
<dbReference type="HAMAP" id="MF_00025">
    <property type="entry name" value="RNApol_Rpo5_RPB5"/>
    <property type="match status" value="1"/>
</dbReference>
<dbReference type="InterPro" id="IPR014381">
    <property type="entry name" value="Arch_Rpo5/euc_Rpb5"/>
</dbReference>
<dbReference type="InterPro" id="IPR000783">
    <property type="entry name" value="RNA_pol_subH/Rpb5_C"/>
</dbReference>
<dbReference type="InterPro" id="IPR020608">
    <property type="entry name" value="RNA_pol_subH/Rpb5_CS"/>
</dbReference>
<dbReference type="InterPro" id="IPR035913">
    <property type="entry name" value="RPB5-like_sf"/>
</dbReference>
<dbReference type="NCBIfam" id="NF007129">
    <property type="entry name" value="PRK09570.1"/>
    <property type="match status" value="1"/>
</dbReference>
<dbReference type="PANTHER" id="PTHR10535">
    <property type="entry name" value="DNA-DIRECTED RNA POLYMERASES I, II, AND III SUBUNIT RPABC1"/>
    <property type="match status" value="1"/>
</dbReference>
<dbReference type="PANTHER" id="PTHR10535:SF0">
    <property type="entry name" value="DNA-DIRECTED RNA POLYMERASES I, II, AND III SUBUNIT RPABC1"/>
    <property type="match status" value="1"/>
</dbReference>
<dbReference type="Pfam" id="PF01191">
    <property type="entry name" value="RNA_pol_Rpb5_C"/>
    <property type="match status" value="1"/>
</dbReference>
<dbReference type="SUPFAM" id="SSF55287">
    <property type="entry name" value="RPB5-like RNA polymerase subunit"/>
    <property type="match status" value="1"/>
</dbReference>
<dbReference type="PROSITE" id="PS01110">
    <property type="entry name" value="RNA_POL_H_23KD"/>
    <property type="match status" value="1"/>
</dbReference>
<organism>
    <name type="scientific">Thermococcus kodakarensis (strain ATCC BAA-918 / JCM 12380 / KOD1)</name>
    <name type="common">Pyrococcus kodakaraensis (strain KOD1)</name>
    <dbReference type="NCBI Taxonomy" id="69014"/>
    <lineage>
        <taxon>Archaea</taxon>
        <taxon>Methanobacteriati</taxon>
        <taxon>Methanobacteriota</taxon>
        <taxon>Thermococci</taxon>
        <taxon>Thermococcales</taxon>
        <taxon>Thermococcaceae</taxon>
        <taxon>Thermococcus</taxon>
    </lineage>
</organism>
<evidence type="ECO:0000255" key="1">
    <source>
        <dbReference type="HAMAP-Rule" id="MF_00025"/>
    </source>
</evidence>
<evidence type="ECO:0007829" key="2">
    <source>
        <dbReference type="PDB" id="9BCU"/>
    </source>
</evidence>
<reference key="1">
    <citation type="journal article" date="2005" name="Genome Res.">
        <title>Complete genome sequence of the hyperthermophilic archaeon Thermococcus kodakaraensis KOD1 and comparison with Pyrococcus genomes.</title>
        <authorList>
            <person name="Fukui T."/>
            <person name="Atomi H."/>
            <person name="Kanai T."/>
            <person name="Matsumi R."/>
            <person name="Fujiwara S."/>
            <person name="Imanaka T."/>
        </authorList>
    </citation>
    <scope>NUCLEOTIDE SEQUENCE [LARGE SCALE GENOMIC DNA]</scope>
    <source>
        <strain>ATCC BAA-918 / JCM 12380 / KOD1</strain>
    </source>
</reference>
<comment type="function">
    <text evidence="1">DNA-dependent RNA polymerase (RNAP) catalyzes the transcription of DNA into RNA using the four ribonucleoside triphosphates as substrates.</text>
</comment>
<comment type="catalytic activity">
    <reaction evidence="1">
        <text>RNA(n) + a ribonucleoside 5'-triphosphate = RNA(n+1) + diphosphate</text>
        <dbReference type="Rhea" id="RHEA:21248"/>
        <dbReference type="Rhea" id="RHEA-COMP:14527"/>
        <dbReference type="Rhea" id="RHEA-COMP:17342"/>
        <dbReference type="ChEBI" id="CHEBI:33019"/>
        <dbReference type="ChEBI" id="CHEBI:61557"/>
        <dbReference type="ChEBI" id="CHEBI:140395"/>
        <dbReference type="EC" id="2.7.7.6"/>
    </reaction>
</comment>
<comment type="subunit">
    <text evidence="1">Part of the RNA polymerase complex.</text>
</comment>
<comment type="subcellular location">
    <subcellularLocation>
        <location evidence="1">Cytoplasm</location>
    </subcellularLocation>
</comment>
<comment type="similarity">
    <text evidence="1">Belongs to the archaeal Rpo5/eukaryotic RPB5 RNA polymerase subunit family.</text>
</comment>
<protein>
    <recommendedName>
        <fullName evidence="1">DNA-directed RNA polymerase subunit Rpo5</fullName>
        <ecNumber evidence="1">2.7.7.6</ecNumber>
    </recommendedName>
    <alternativeName>
        <fullName evidence="1">DNA-directed RNA polymerase subunit H</fullName>
    </alternativeName>
</protein>
<gene>
    <name evidence="1" type="primary">rpo5</name>
    <name evidence="1" type="synonym">rpoH</name>
    <name type="ordered locus">TK1084</name>
</gene>
<feature type="chain" id="PRO_0000146102" description="DNA-directed RNA polymerase subunit Rpo5">
    <location>
        <begin position="1"/>
        <end position="82"/>
    </location>
</feature>
<feature type="helix" evidence="2">
    <location>
        <begin position="9"/>
        <end position="11"/>
    </location>
</feature>
<feature type="strand" evidence="2">
    <location>
        <begin position="17"/>
        <end position="20"/>
    </location>
</feature>
<feature type="helix" evidence="2">
    <location>
        <begin position="23"/>
        <end position="33"/>
    </location>
</feature>
<feature type="helix" evidence="2">
    <location>
        <begin position="37"/>
        <end position="39"/>
    </location>
</feature>
<feature type="strand" evidence="2">
    <location>
        <begin position="42"/>
        <end position="44"/>
    </location>
</feature>
<feature type="helix" evidence="2">
    <location>
        <begin position="48"/>
        <end position="53"/>
    </location>
</feature>
<feature type="strand" evidence="2">
    <location>
        <begin position="60"/>
        <end position="67"/>
    </location>
</feature>
<feature type="turn" evidence="2">
    <location>
        <begin position="68"/>
        <end position="70"/>
    </location>
</feature>
<feature type="strand" evidence="2">
    <location>
        <begin position="71"/>
        <end position="80"/>
    </location>
</feature>
<proteinExistence type="evidence at protein level"/>
<name>RPO5_THEKO</name>
<keyword id="KW-0002">3D-structure</keyword>
<keyword id="KW-0963">Cytoplasm</keyword>
<keyword id="KW-0240">DNA-directed RNA polymerase</keyword>
<keyword id="KW-0548">Nucleotidyltransferase</keyword>
<keyword id="KW-1185">Reference proteome</keyword>
<keyword id="KW-0804">Transcription</keyword>
<keyword id="KW-0808">Transferase</keyword>
<accession>Q5JE31</accession>
<sequence length="82" mass="9506">MAAKKEFNIFDHVLVPEHRILSEEEKEELLKKYRIRISQLPQIKASDPAVVALGAKPGDVIEIKRKSPTAGYYYYYRLVVED</sequence>